<evidence type="ECO:0000255" key="1">
    <source>
        <dbReference type="HAMAP-Rule" id="MF_01067"/>
    </source>
</evidence>
<organism>
    <name type="scientific">Escherichia coli O139:H28 (strain E24377A / ETEC)</name>
    <dbReference type="NCBI Taxonomy" id="331111"/>
    <lineage>
        <taxon>Bacteria</taxon>
        <taxon>Pseudomonadati</taxon>
        <taxon>Pseudomonadota</taxon>
        <taxon>Gammaproteobacteria</taxon>
        <taxon>Enterobacterales</taxon>
        <taxon>Enterobacteriaceae</taxon>
        <taxon>Escherichia</taxon>
    </lineage>
</organism>
<proteinExistence type="inferred from homology"/>
<reference key="1">
    <citation type="journal article" date="2008" name="J. Bacteriol.">
        <title>The pangenome structure of Escherichia coli: comparative genomic analysis of E. coli commensal and pathogenic isolates.</title>
        <authorList>
            <person name="Rasko D.A."/>
            <person name="Rosovitz M.J."/>
            <person name="Myers G.S.A."/>
            <person name="Mongodin E.F."/>
            <person name="Fricke W.F."/>
            <person name="Gajer P."/>
            <person name="Crabtree J."/>
            <person name="Sebaihia M."/>
            <person name="Thomson N.R."/>
            <person name="Chaudhuri R."/>
            <person name="Henderson I.R."/>
            <person name="Sperandio V."/>
            <person name="Ravel J."/>
        </authorList>
    </citation>
    <scope>NUCLEOTIDE SEQUENCE [LARGE SCALE GENOMIC DNA]</scope>
    <source>
        <strain>E24377A / ETEC</strain>
    </source>
</reference>
<protein>
    <recommendedName>
        <fullName evidence="1">UPF0259 membrane protein YciC</fullName>
    </recommendedName>
</protein>
<sequence length="247" mass="26433">MSITAQSVYRDTGNFFRNQFMTILLVSLLCAFITVVLGHVFSPSDAQLAQLNDGVPVSGSSGLFDLVQNMSPEQQQILLQASAASTFSGLIGNAILAGGVILIIQLVSAGQRVSALRAIGASAPILPKLFILIFLTTLLVQIGIMLVVVPGLIMAILLALAPVMLVQDKMGIFASMRSSMRLTWANMRLVAPAVLSWLLAKTLLLLFASSFAALTPEIGAVLANTLSNLISAILLIYLFRLYMLIRQ</sequence>
<feature type="chain" id="PRO_1000064520" description="UPF0259 membrane protein YciC">
    <location>
        <begin position="1"/>
        <end position="247"/>
    </location>
</feature>
<feature type="transmembrane region" description="Helical" evidence="1">
    <location>
        <begin position="20"/>
        <end position="40"/>
    </location>
</feature>
<feature type="transmembrane region" description="Helical" evidence="1">
    <location>
        <begin position="87"/>
        <end position="107"/>
    </location>
</feature>
<feature type="transmembrane region" description="Helical" evidence="1">
    <location>
        <begin position="118"/>
        <end position="140"/>
    </location>
</feature>
<feature type="transmembrane region" description="Helical" evidence="1">
    <location>
        <begin position="153"/>
        <end position="173"/>
    </location>
</feature>
<feature type="transmembrane region" description="Helical" evidence="1">
    <location>
        <begin position="187"/>
        <end position="209"/>
    </location>
</feature>
<feature type="transmembrane region" description="Helical" evidence="1">
    <location>
        <begin position="225"/>
        <end position="245"/>
    </location>
</feature>
<comment type="subcellular location">
    <subcellularLocation>
        <location evidence="1">Cell inner membrane</location>
        <topology evidence="1">Multi-pass membrane protein</topology>
    </subcellularLocation>
</comment>
<comment type="similarity">
    <text evidence="1">Belongs to the UPF0259 family.</text>
</comment>
<dbReference type="EMBL" id="CP000800">
    <property type="protein sequence ID" value="ABV20154.1"/>
    <property type="molecule type" value="Genomic_DNA"/>
</dbReference>
<dbReference type="RefSeq" id="WP_000028548.1">
    <property type="nucleotide sequence ID" value="NC_009801.1"/>
</dbReference>
<dbReference type="SMR" id="A7ZL36"/>
<dbReference type="KEGG" id="ecw:EcE24377A_1413"/>
<dbReference type="HOGENOM" id="CLU_073287_0_0_6"/>
<dbReference type="Proteomes" id="UP000001122">
    <property type="component" value="Chromosome"/>
</dbReference>
<dbReference type="GO" id="GO:0005886">
    <property type="term" value="C:plasma membrane"/>
    <property type="evidence" value="ECO:0007669"/>
    <property type="project" value="UniProtKB-SubCell"/>
</dbReference>
<dbReference type="HAMAP" id="MF_01067">
    <property type="entry name" value="UPF0259"/>
    <property type="match status" value="1"/>
</dbReference>
<dbReference type="InterPro" id="IPR009627">
    <property type="entry name" value="UPF0259"/>
</dbReference>
<dbReference type="NCBIfam" id="NF002774">
    <property type="entry name" value="PRK02868.1"/>
    <property type="match status" value="1"/>
</dbReference>
<dbReference type="Pfam" id="PF06790">
    <property type="entry name" value="UPF0259"/>
    <property type="match status" value="1"/>
</dbReference>
<gene>
    <name evidence="1" type="primary">yciC</name>
    <name type="ordered locus">EcE24377A_1413</name>
</gene>
<keyword id="KW-0997">Cell inner membrane</keyword>
<keyword id="KW-1003">Cell membrane</keyword>
<keyword id="KW-0472">Membrane</keyword>
<keyword id="KW-1185">Reference proteome</keyword>
<keyword id="KW-0812">Transmembrane</keyword>
<keyword id="KW-1133">Transmembrane helix</keyword>
<accession>A7ZL36</accession>
<name>YCIC_ECO24</name>